<comment type="function">
    <text evidence="1">Required for maturation of urease via the functional incorporation of the urease nickel metallocenter.</text>
</comment>
<comment type="subunit">
    <text evidence="1">UreD, UreF and UreG form a complex that acts as a GTP-hydrolysis-dependent molecular chaperone, activating the urease apoprotein by helping to assemble the nickel containing metallocenter of UreC. The UreE protein probably delivers the nickel.</text>
</comment>
<comment type="subcellular location">
    <subcellularLocation>
        <location evidence="1">Cytoplasm</location>
    </subcellularLocation>
</comment>
<comment type="similarity">
    <text evidence="1">Belongs to the UreD family.</text>
</comment>
<comment type="sequence caution" evidence="2">
    <conflict type="erroneous initiation">
        <sequence resource="EMBL-CDS" id="CAH36664"/>
    </conflict>
</comment>
<gene>
    <name evidence="1" type="primary">ureD</name>
    <name type="ordered locus">BPSL2656</name>
</gene>
<sequence length="291" mass="30980">MSAHEPHTSLVRPAAKAWHARLELGFERQPGGRTALAHRRHVGPLRVQRALYPEGDAICHAVIVHPPGGVAGGDRLEIDVRLDAGTHAVLTTPGATKWYKSNGLDARQRIDIDVGAHAKLDWLPQNNLFFDAAHASLEFVLALGDGASVLGWDATQLGRQAAGEAWSAGSIASFSKIVGPSGRPLWVERARLDAGDPLRAAPQGLGGFAVYGTLWALGAACTEALAESIAPALPFDDALRAGVTCVAPGTLLIRALAHSMEALQRLLAEQWLALRPIVHGVDPKPLRLWQT</sequence>
<keyword id="KW-0143">Chaperone</keyword>
<keyword id="KW-0963">Cytoplasm</keyword>
<keyword id="KW-0996">Nickel insertion</keyword>
<keyword id="KW-1185">Reference proteome</keyword>
<feature type="chain" id="PRO_0000340437" description="Urease accessory protein UreD">
    <location>
        <begin position="1"/>
        <end position="291"/>
    </location>
</feature>
<protein>
    <recommendedName>
        <fullName evidence="1">Urease accessory protein UreD</fullName>
    </recommendedName>
</protein>
<organism>
    <name type="scientific">Burkholderia pseudomallei (strain K96243)</name>
    <dbReference type="NCBI Taxonomy" id="272560"/>
    <lineage>
        <taxon>Bacteria</taxon>
        <taxon>Pseudomonadati</taxon>
        <taxon>Pseudomonadota</taxon>
        <taxon>Betaproteobacteria</taxon>
        <taxon>Burkholderiales</taxon>
        <taxon>Burkholderiaceae</taxon>
        <taxon>Burkholderia</taxon>
        <taxon>pseudomallei group</taxon>
    </lineage>
</organism>
<reference key="1">
    <citation type="journal article" date="2004" name="Proc. Natl. Acad. Sci. U.S.A.">
        <title>Genomic plasticity of the causative agent of melioidosis, Burkholderia pseudomallei.</title>
        <authorList>
            <person name="Holden M.T.G."/>
            <person name="Titball R.W."/>
            <person name="Peacock S.J."/>
            <person name="Cerdeno-Tarraga A.-M."/>
            <person name="Atkins T."/>
            <person name="Crossman L.C."/>
            <person name="Pitt T."/>
            <person name="Churcher C."/>
            <person name="Mungall K.L."/>
            <person name="Bentley S.D."/>
            <person name="Sebaihia M."/>
            <person name="Thomson N.R."/>
            <person name="Bason N."/>
            <person name="Beacham I.R."/>
            <person name="Brooks K."/>
            <person name="Brown K.A."/>
            <person name="Brown N.F."/>
            <person name="Challis G.L."/>
            <person name="Cherevach I."/>
            <person name="Chillingworth T."/>
            <person name="Cronin A."/>
            <person name="Crossett B."/>
            <person name="Davis P."/>
            <person name="DeShazer D."/>
            <person name="Feltwell T."/>
            <person name="Fraser A."/>
            <person name="Hance Z."/>
            <person name="Hauser H."/>
            <person name="Holroyd S."/>
            <person name="Jagels K."/>
            <person name="Keith K.E."/>
            <person name="Maddison M."/>
            <person name="Moule S."/>
            <person name="Price C."/>
            <person name="Quail M.A."/>
            <person name="Rabbinowitsch E."/>
            <person name="Rutherford K."/>
            <person name="Sanders M."/>
            <person name="Simmonds M."/>
            <person name="Songsivilai S."/>
            <person name="Stevens K."/>
            <person name="Tumapa S."/>
            <person name="Vesaratchavest M."/>
            <person name="Whitehead S."/>
            <person name="Yeats C."/>
            <person name="Barrell B.G."/>
            <person name="Oyston P.C.F."/>
            <person name="Parkhill J."/>
        </authorList>
    </citation>
    <scope>NUCLEOTIDE SEQUENCE [LARGE SCALE GENOMIC DNA]</scope>
    <source>
        <strain>K96243</strain>
    </source>
</reference>
<accession>Q63RL6</accession>
<dbReference type="EMBL" id="BX571965">
    <property type="protein sequence ID" value="CAH36664.1"/>
    <property type="status" value="ALT_INIT"/>
    <property type="molecule type" value="Genomic_DNA"/>
</dbReference>
<dbReference type="RefSeq" id="WP_004185533.1">
    <property type="nucleotide sequence ID" value="NZ_CP009538.1"/>
</dbReference>
<dbReference type="RefSeq" id="YP_109252.1">
    <property type="nucleotide sequence ID" value="NC_006350.1"/>
</dbReference>
<dbReference type="SMR" id="Q63RL6"/>
<dbReference type="STRING" id="272560.BPSL2656"/>
<dbReference type="KEGG" id="bps:BPSL2656"/>
<dbReference type="PATRIC" id="fig|272560.51.peg.2689"/>
<dbReference type="eggNOG" id="COG0829">
    <property type="taxonomic scope" value="Bacteria"/>
</dbReference>
<dbReference type="Proteomes" id="UP000000605">
    <property type="component" value="Chromosome 1"/>
</dbReference>
<dbReference type="GO" id="GO:0005737">
    <property type="term" value="C:cytoplasm"/>
    <property type="evidence" value="ECO:0007669"/>
    <property type="project" value="UniProtKB-SubCell"/>
</dbReference>
<dbReference type="GO" id="GO:0016151">
    <property type="term" value="F:nickel cation binding"/>
    <property type="evidence" value="ECO:0007669"/>
    <property type="project" value="UniProtKB-UniRule"/>
</dbReference>
<dbReference type="HAMAP" id="MF_01384">
    <property type="entry name" value="UreD"/>
    <property type="match status" value="1"/>
</dbReference>
<dbReference type="InterPro" id="IPR002669">
    <property type="entry name" value="UreD"/>
</dbReference>
<dbReference type="PANTHER" id="PTHR33643">
    <property type="entry name" value="UREASE ACCESSORY PROTEIN D"/>
    <property type="match status" value="1"/>
</dbReference>
<dbReference type="PANTHER" id="PTHR33643:SF1">
    <property type="entry name" value="UREASE ACCESSORY PROTEIN D"/>
    <property type="match status" value="1"/>
</dbReference>
<dbReference type="Pfam" id="PF01774">
    <property type="entry name" value="UreD"/>
    <property type="match status" value="1"/>
</dbReference>
<proteinExistence type="inferred from homology"/>
<evidence type="ECO:0000255" key="1">
    <source>
        <dbReference type="HAMAP-Rule" id="MF_01384"/>
    </source>
</evidence>
<evidence type="ECO:0000305" key="2"/>
<name>URED_BURPS</name>